<reference key="1">
    <citation type="journal article" date="1998" name="Nature">
        <title>Deciphering the biology of Mycobacterium tuberculosis from the complete genome sequence.</title>
        <authorList>
            <person name="Cole S.T."/>
            <person name="Brosch R."/>
            <person name="Parkhill J."/>
            <person name="Garnier T."/>
            <person name="Churcher C.M."/>
            <person name="Harris D.E."/>
            <person name="Gordon S.V."/>
            <person name="Eiglmeier K."/>
            <person name="Gas S."/>
            <person name="Barry C.E. III"/>
            <person name="Tekaia F."/>
            <person name="Badcock K."/>
            <person name="Basham D."/>
            <person name="Brown D."/>
            <person name="Chillingworth T."/>
            <person name="Connor R."/>
            <person name="Davies R.M."/>
            <person name="Devlin K."/>
            <person name="Feltwell T."/>
            <person name="Gentles S."/>
            <person name="Hamlin N."/>
            <person name="Holroyd S."/>
            <person name="Hornsby T."/>
            <person name="Jagels K."/>
            <person name="Krogh A."/>
            <person name="McLean J."/>
            <person name="Moule S."/>
            <person name="Murphy L.D."/>
            <person name="Oliver S."/>
            <person name="Osborne J."/>
            <person name="Quail M.A."/>
            <person name="Rajandream M.A."/>
            <person name="Rogers J."/>
            <person name="Rutter S."/>
            <person name="Seeger K."/>
            <person name="Skelton S."/>
            <person name="Squares S."/>
            <person name="Squares R."/>
            <person name="Sulston J.E."/>
            <person name="Taylor K."/>
            <person name="Whitehead S."/>
            <person name="Barrell B.G."/>
        </authorList>
    </citation>
    <scope>NUCLEOTIDE SEQUENCE [LARGE SCALE GENOMIC DNA]</scope>
    <source>
        <strain>ATCC 25618 / H37Rv</strain>
    </source>
</reference>
<reference key="2">
    <citation type="journal article" date="2008" name="BMC Syst. Biol.">
        <title>targetTB: a target identification pipeline for Mycobacterium tuberculosis through an interactome, reactome and genome-scale structural analysis.</title>
        <authorList>
            <person name="Raman K."/>
            <person name="Yeturu K."/>
            <person name="Chandra N."/>
        </authorList>
    </citation>
    <scope>IDENTIFICATION AS A DRUG TARGET [LARGE SCALE ANALYSIS]</scope>
</reference>
<reference key="3">
    <citation type="journal article" date="2011" name="Mol. Cell. Proteomics">
        <title>Proteogenomic analysis of Mycobacterium tuberculosis by high resolution mass spectrometry.</title>
        <authorList>
            <person name="Kelkar D.S."/>
            <person name="Kumar D."/>
            <person name="Kumar P."/>
            <person name="Balakrishnan L."/>
            <person name="Muthusamy B."/>
            <person name="Yadav A.K."/>
            <person name="Shrivastava P."/>
            <person name="Marimuthu A."/>
            <person name="Anand S."/>
            <person name="Sundaram H."/>
            <person name="Kingsbury R."/>
            <person name="Harsha H.C."/>
            <person name="Nair B."/>
            <person name="Prasad T.S."/>
            <person name="Chauhan D.S."/>
            <person name="Katoch K."/>
            <person name="Katoch V.M."/>
            <person name="Kumar P."/>
            <person name="Chaerkady R."/>
            <person name="Ramachandran S."/>
            <person name="Dash D."/>
            <person name="Pandey A."/>
        </authorList>
    </citation>
    <scope>IDENTIFICATION BY MASS SPECTROMETRY [LARGE SCALE ANALYSIS]</scope>
    <source>
        <strain>ATCC 25618 / H37Rv</strain>
    </source>
</reference>
<reference key="4">
    <citation type="journal article" date="2013" name="J. Biol. Chem.">
        <title>Radiation-sensitive gene A (RadA) targets DisA, DNA integrity scanning protein A, to negatively affect cyclic di-AMP synthesis activity in Mycobacterium smegmatis.</title>
        <authorList>
            <person name="Zhang L."/>
            <person name="He Z.G."/>
        </authorList>
    </citation>
    <scope>INTERACTION WITH DISA</scope>
</reference>
<keyword id="KW-0067">ATP-binding</keyword>
<keyword id="KW-0227">DNA damage</keyword>
<keyword id="KW-0234">DNA repair</keyword>
<keyword id="KW-0238">DNA-binding</keyword>
<keyword id="KW-0378">Hydrolase</keyword>
<keyword id="KW-0479">Metal-binding</keyword>
<keyword id="KW-0547">Nucleotide-binding</keyword>
<keyword id="KW-1185">Reference proteome</keyword>
<keyword id="KW-0346">Stress response</keyword>
<keyword id="KW-0862">Zinc</keyword>
<keyword id="KW-0863">Zinc-finger</keyword>
<organism>
    <name type="scientific">Mycobacterium tuberculosis (strain ATCC 25618 / H37Rv)</name>
    <dbReference type="NCBI Taxonomy" id="83332"/>
    <lineage>
        <taxon>Bacteria</taxon>
        <taxon>Bacillati</taxon>
        <taxon>Actinomycetota</taxon>
        <taxon>Actinomycetes</taxon>
        <taxon>Mycobacteriales</taxon>
        <taxon>Mycobacteriaceae</taxon>
        <taxon>Mycobacterium</taxon>
        <taxon>Mycobacterium tuberculosis complex</taxon>
    </lineage>
</organism>
<accession>P9WHJ9</accession>
<accession>L0TCZ7</accession>
<accession>O53570</accession>
<accession>P65953</accession>
<gene>
    <name evidence="1" type="primary">radA</name>
    <name type="ordered locus">Rv3585</name>
    <name type="ORF">MTV024.03</name>
</gene>
<dbReference type="EC" id="3.6.4.-" evidence="1"/>
<dbReference type="EMBL" id="AL123456">
    <property type="protein sequence ID" value="CCP46408.1"/>
    <property type="molecule type" value="Genomic_DNA"/>
</dbReference>
<dbReference type="PIR" id="B70804">
    <property type="entry name" value="B70804"/>
</dbReference>
<dbReference type="RefSeq" id="NP_218102.1">
    <property type="nucleotide sequence ID" value="NC_000962.3"/>
</dbReference>
<dbReference type="RefSeq" id="WP_003419487.1">
    <property type="nucleotide sequence ID" value="NZ_NVQJ01000014.1"/>
</dbReference>
<dbReference type="SMR" id="P9WHJ9"/>
<dbReference type="FunCoup" id="P9WHJ9">
    <property type="interactions" value="94"/>
</dbReference>
<dbReference type="STRING" id="83332.Rv3585"/>
<dbReference type="PaxDb" id="83332-Rv3585"/>
<dbReference type="DNASU" id="887287"/>
<dbReference type="GeneID" id="45427573"/>
<dbReference type="GeneID" id="887287"/>
<dbReference type="KEGG" id="mtu:Rv3585"/>
<dbReference type="KEGG" id="mtv:RVBD_3585"/>
<dbReference type="TubercuList" id="Rv3585"/>
<dbReference type="eggNOG" id="COG1066">
    <property type="taxonomic scope" value="Bacteria"/>
</dbReference>
<dbReference type="InParanoid" id="P9WHJ9"/>
<dbReference type="OrthoDB" id="9803906at2"/>
<dbReference type="PhylomeDB" id="P9WHJ9"/>
<dbReference type="Proteomes" id="UP000001584">
    <property type="component" value="Chromosome"/>
</dbReference>
<dbReference type="GO" id="GO:0005829">
    <property type="term" value="C:cytosol"/>
    <property type="evidence" value="ECO:0007005"/>
    <property type="project" value="MTBBASE"/>
</dbReference>
<dbReference type="GO" id="GO:0005524">
    <property type="term" value="F:ATP binding"/>
    <property type="evidence" value="ECO:0007669"/>
    <property type="project" value="UniProtKB-UniRule"/>
</dbReference>
<dbReference type="GO" id="GO:0016887">
    <property type="term" value="F:ATP hydrolysis activity"/>
    <property type="evidence" value="ECO:0007669"/>
    <property type="project" value="InterPro"/>
</dbReference>
<dbReference type="GO" id="GO:0140664">
    <property type="term" value="F:ATP-dependent DNA damage sensor activity"/>
    <property type="evidence" value="ECO:0007669"/>
    <property type="project" value="InterPro"/>
</dbReference>
<dbReference type="GO" id="GO:0003684">
    <property type="term" value="F:damaged DNA binding"/>
    <property type="evidence" value="ECO:0007669"/>
    <property type="project" value="InterPro"/>
</dbReference>
<dbReference type="GO" id="GO:0008270">
    <property type="term" value="F:zinc ion binding"/>
    <property type="evidence" value="ECO:0007669"/>
    <property type="project" value="UniProtKB-KW"/>
</dbReference>
<dbReference type="GO" id="GO:0000725">
    <property type="term" value="P:recombinational repair"/>
    <property type="evidence" value="ECO:0000318"/>
    <property type="project" value="GO_Central"/>
</dbReference>
<dbReference type="CDD" id="cd01121">
    <property type="entry name" value="RadA_SMS_N"/>
    <property type="match status" value="1"/>
</dbReference>
<dbReference type="FunFam" id="3.30.230.10:FF:000026">
    <property type="entry name" value="DNA repair protein RadA"/>
    <property type="match status" value="1"/>
</dbReference>
<dbReference type="FunFam" id="3.40.50.300:FF:000050">
    <property type="entry name" value="DNA repair protein RadA"/>
    <property type="match status" value="1"/>
</dbReference>
<dbReference type="Gene3D" id="3.30.230.10">
    <property type="match status" value="1"/>
</dbReference>
<dbReference type="Gene3D" id="3.40.50.300">
    <property type="entry name" value="P-loop containing nucleotide triphosphate hydrolases"/>
    <property type="match status" value="1"/>
</dbReference>
<dbReference type="HAMAP" id="MF_01498">
    <property type="entry name" value="RadA_bact"/>
    <property type="match status" value="1"/>
</dbReference>
<dbReference type="InterPro" id="IPR003593">
    <property type="entry name" value="AAA+_ATPase"/>
</dbReference>
<dbReference type="InterPro" id="IPR004504">
    <property type="entry name" value="DNA_repair_RadA"/>
</dbReference>
<dbReference type="InterPro" id="IPR027417">
    <property type="entry name" value="P-loop_NTPase"/>
</dbReference>
<dbReference type="InterPro" id="IPR020588">
    <property type="entry name" value="RecA_ATP-bd"/>
</dbReference>
<dbReference type="InterPro" id="IPR020568">
    <property type="entry name" value="Ribosomal_Su5_D2-typ_SF"/>
</dbReference>
<dbReference type="InterPro" id="IPR014721">
    <property type="entry name" value="Ribsml_uS5_D2-typ_fold_subgr"/>
</dbReference>
<dbReference type="InterPro" id="IPR041166">
    <property type="entry name" value="Rubredoxin_2"/>
</dbReference>
<dbReference type="NCBIfam" id="TIGR00416">
    <property type="entry name" value="sms"/>
    <property type="match status" value="1"/>
</dbReference>
<dbReference type="PANTHER" id="PTHR32472">
    <property type="entry name" value="DNA REPAIR PROTEIN RADA"/>
    <property type="match status" value="1"/>
</dbReference>
<dbReference type="PANTHER" id="PTHR32472:SF10">
    <property type="entry name" value="DNA REPAIR PROTEIN RADA-LIKE PROTEIN"/>
    <property type="match status" value="1"/>
</dbReference>
<dbReference type="Pfam" id="PF13481">
    <property type="entry name" value="AAA_25"/>
    <property type="match status" value="1"/>
</dbReference>
<dbReference type="Pfam" id="PF13541">
    <property type="entry name" value="ChlI"/>
    <property type="match status" value="1"/>
</dbReference>
<dbReference type="Pfam" id="PF18073">
    <property type="entry name" value="Zn_ribbon_LapB"/>
    <property type="match status" value="1"/>
</dbReference>
<dbReference type="PRINTS" id="PR01874">
    <property type="entry name" value="DNAREPAIRADA"/>
</dbReference>
<dbReference type="SMART" id="SM00382">
    <property type="entry name" value="AAA"/>
    <property type="match status" value="1"/>
</dbReference>
<dbReference type="SUPFAM" id="SSF52540">
    <property type="entry name" value="P-loop containing nucleoside triphosphate hydrolases"/>
    <property type="match status" value="1"/>
</dbReference>
<dbReference type="SUPFAM" id="SSF54211">
    <property type="entry name" value="Ribosomal protein S5 domain 2-like"/>
    <property type="match status" value="1"/>
</dbReference>
<dbReference type="PROSITE" id="PS50162">
    <property type="entry name" value="RECA_2"/>
    <property type="match status" value="1"/>
</dbReference>
<protein>
    <recommendedName>
        <fullName evidence="1">DNA repair protein RadA</fullName>
        <ecNumber evidence="1">3.6.4.-</ecNumber>
    </recommendedName>
    <alternativeName>
        <fullName evidence="1">Branch migration protein RadA</fullName>
    </alternativeName>
    <alternativeName>
        <fullName>DNA repair protein Sms</fullName>
    </alternativeName>
</protein>
<proteinExistence type="evidence at protein level"/>
<comment type="function">
    <text evidence="1">DNA-dependent ATPase involved in processing of recombination intermediates, plays a role in repairing DNA breaks. Stimulates the branch migration of RecA-mediated strand transfer reactions, allowing the 3' invading strand to extend heteroduplex DNA faster. Binds ssDNA in the presence of ADP but not other nucleotides, has ATPase activity that is stimulated by ssDNA and various branched DNA structures, but inhibited by SSB. Does not have RecA's homology-searching function.</text>
</comment>
<comment type="subunit">
    <text evidence="3">Interacts with DisA (PubMed:23760274).</text>
</comment>
<comment type="domain">
    <text evidence="1">Has a putative N-terminal zinc-finger, a middle region with homology to RecA with ATPase motifs including the RadA KNRFG motif, while the C-terminus is homologous to Lon protease.</text>
</comment>
<comment type="miscellaneous">
    <text>Was identified as a high-confidence drug target.</text>
</comment>
<comment type="similarity">
    <text evidence="1">Belongs to the RecA family. RadA subfamily.</text>
</comment>
<name>RADA_MYCTU</name>
<sequence>MANARSQYRCSECRHVSAKWVGRCLECGRWGTVDEVAVLSAVGGTRRRSVAPASGAVPISAVDAHRTRPCPTGIDELDRVLGGGIVPGSVTLLAGDPGVGKSTLLLEVAHRWAQSGRRALYVSGEESAGQIRLRADRIGCGTEVEEIYLAAQSDVHTVLDQIETVQPALVIVDSVQTMSTSEADGVTGGVTQVRAVTAALTAAAKANEVALILVGHVTKDGAIAGPRSLEHLVDVVLHFEGDRNGALRMVRGVKNRFGAADEVGCFLLHDNGIDGIVDPSNLFLDQRPTPVAGTAITVTLDGKRPLVGEVQALLATPCGGSPRRAVSGIHQARAAMIAAVLEKHARLAIAVNDIYLSTVGGMRLTEPSADLAVAIALASAYANLPLPTTAVMIGEVGLAGDIRRVNGMARRLSEAARQGFTIALVPPSDDPVPPGMHALRASTIVAALQYMVDIADHRGTTLATPPSHSGTGHVPLGRGT</sequence>
<feature type="chain" id="PRO_0000187932" description="DNA repair protein RadA">
    <location>
        <begin position="1"/>
        <end position="480"/>
    </location>
</feature>
<feature type="zinc finger region" description="C4-type" evidence="1">
    <location>
        <begin position="10"/>
        <end position="27"/>
    </location>
</feature>
<feature type="region of interest" description="Lon-protease-like" evidence="1">
    <location>
        <begin position="353"/>
        <end position="480"/>
    </location>
</feature>
<feature type="region of interest" description="Disordered" evidence="2">
    <location>
        <begin position="459"/>
        <end position="480"/>
    </location>
</feature>
<feature type="short sequence motif" description="RadA KNRFG motif" evidence="1">
    <location>
        <begin position="254"/>
        <end position="258"/>
    </location>
</feature>
<feature type="compositionally biased region" description="Polar residues" evidence="2">
    <location>
        <begin position="461"/>
        <end position="470"/>
    </location>
</feature>
<feature type="binding site" evidence="1">
    <location>
        <begin position="95"/>
        <end position="102"/>
    </location>
    <ligand>
        <name>ATP</name>
        <dbReference type="ChEBI" id="CHEBI:30616"/>
    </ligand>
</feature>
<evidence type="ECO:0000255" key="1">
    <source>
        <dbReference type="HAMAP-Rule" id="MF_01498"/>
    </source>
</evidence>
<evidence type="ECO:0000256" key="2">
    <source>
        <dbReference type="SAM" id="MobiDB-lite"/>
    </source>
</evidence>
<evidence type="ECO:0000269" key="3">
    <source>
    </source>
</evidence>